<sequence>MYRIRVFGDPVLRKRAKPVTKFDDNLEKTIERMIETMYHYDGVGLAAPQVGISQRFFVMDVGNGPVAVINPEILEIDPETEVAEEGCLSFPEIFVEIERSKRIKVRYQNTKGEYVEEVLEGYAARVFQHEFDHLNGVLIIDRISPAKRLLLRKKLMDIARTVKR</sequence>
<feature type="chain" id="PRO_1000023137" description="Peptide deformylase">
    <location>
        <begin position="1"/>
        <end position="164"/>
    </location>
</feature>
<feature type="active site" evidence="1">
    <location>
        <position position="130"/>
    </location>
</feature>
<feature type="binding site" evidence="1">
    <location>
        <position position="87"/>
    </location>
    <ligand>
        <name>Fe cation</name>
        <dbReference type="ChEBI" id="CHEBI:24875"/>
    </ligand>
</feature>
<feature type="binding site" evidence="1">
    <location>
        <position position="129"/>
    </location>
    <ligand>
        <name>Fe cation</name>
        <dbReference type="ChEBI" id="CHEBI:24875"/>
    </ligand>
</feature>
<feature type="binding site" evidence="1">
    <location>
        <position position="133"/>
    </location>
    <ligand>
        <name>Fe cation</name>
        <dbReference type="ChEBI" id="CHEBI:24875"/>
    </ligand>
</feature>
<evidence type="ECO:0000255" key="1">
    <source>
        <dbReference type="HAMAP-Rule" id="MF_00163"/>
    </source>
</evidence>
<organism>
    <name type="scientific">Thermotoga petrophila (strain ATCC BAA-488 / DSM 13995 / JCM 10881 / RKU-1)</name>
    <dbReference type="NCBI Taxonomy" id="390874"/>
    <lineage>
        <taxon>Bacteria</taxon>
        <taxon>Thermotogati</taxon>
        <taxon>Thermotogota</taxon>
        <taxon>Thermotogae</taxon>
        <taxon>Thermotogales</taxon>
        <taxon>Thermotogaceae</taxon>
        <taxon>Thermotoga</taxon>
    </lineage>
</organism>
<comment type="function">
    <text evidence="1">Removes the formyl group from the N-terminal Met of newly synthesized proteins. Requires at least a dipeptide for an efficient rate of reaction. N-terminal L-methionine is a prerequisite for activity but the enzyme has broad specificity at other positions.</text>
</comment>
<comment type="catalytic activity">
    <reaction evidence="1">
        <text>N-terminal N-formyl-L-methionyl-[peptide] + H2O = N-terminal L-methionyl-[peptide] + formate</text>
        <dbReference type="Rhea" id="RHEA:24420"/>
        <dbReference type="Rhea" id="RHEA-COMP:10639"/>
        <dbReference type="Rhea" id="RHEA-COMP:10640"/>
        <dbReference type="ChEBI" id="CHEBI:15377"/>
        <dbReference type="ChEBI" id="CHEBI:15740"/>
        <dbReference type="ChEBI" id="CHEBI:49298"/>
        <dbReference type="ChEBI" id="CHEBI:64731"/>
        <dbReference type="EC" id="3.5.1.88"/>
    </reaction>
</comment>
<comment type="cofactor">
    <cofactor evidence="1">
        <name>Fe(2+)</name>
        <dbReference type="ChEBI" id="CHEBI:29033"/>
    </cofactor>
    <text evidence="1">Binds 1 Fe(2+) ion.</text>
</comment>
<comment type="similarity">
    <text evidence="1">Belongs to the polypeptide deformylase family.</text>
</comment>
<name>DEF_THEP1</name>
<gene>
    <name evidence="1" type="primary">def</name>
    <name type="ordered locus">Tpet_1130</name>
</gene>
<accession>A5ILS1</accession>
<dbReference type="EC" id="3.5.1.88" evidence="1"/>
<dbReference type="EMBL" id="CP000702">
    <property type="protein sequence ID" value="ABQ47144.1"/>
    <property type="molecule type" value="Genomic_DNA"/>
</dbReference>
<dbReference type="RefSeq" id="WP_011943662.1">
    <property type="nucleotide sequence ID" value="NC_009486.1"/>
</dbReference>
<dbReference type="SMR" id="A5ILS1"/>
<dbReference type="STRING" id="390874.Tpet_1130"/>
<dbReference type="KEGG" id="tpt:Tpet_1130"/>
<dbReference type="eggNOG" id="COG0242">
    <property type="taxonomic scope" value="Bacteria"/>
</dbReference>
<dbReference type="HOGENOM" id="CLU_061901_4_2_0"/>
<dbReference type="Proteomes" id="UP000006558">
    <property type="component" value="Chromosome"/>
</dbReference>
<dbReference type="GO" id="GO:0046872">
    <property type="term" value="F:metal ion binding"/>
    <property type="evidence" value="ECO:0007669"/>
    <property type="project" value="UniProtKB-KW"/>
</dbReference>
<dbReference type="GO" id="GO:0042586">
    <property type="term" value="F:peptide deformylase activity"/>
    <property type="evidence" value="ECO:0007669"/>
    <property type="project" value="UniProtKB-UniRule"/>
</dbReference>
<dbReference type="GO" id="GO:0043686">
    <property type="term" value="P:co-translational protein modification"/>
    <property type="evidence" value="ECO:0007669"/>
    <property type="project" value="TreeGrafter"/>
</dbReference>
<dbReference type="GO" id="GO:0006412">
    <property type="term" value="P:translation"/>
    <property type="evidence" value="ECO:0007669"/>
    <property type="project" value="UniProtKB-UniRule"/>
</dbReference>
<dbReference type="CDD" id="cd00487">
    <property type="entry name" value="Pep_deformylase"/>
    <property type="match status" value="1"/>
</dbReference>
<dbReference type="FunFam" id="3.90.45.10:FF:000013">
    <property type="entry name" value="Peptide deformylase"/>
    <property type="match status" value="1"/>
</dbReference>
<dbReference type="Gene3D" id="3.90.45.10">
    <property type="entry name" value="Peptide deformylase"/>
    <property type="match status" value="1"/>
</dbReference>
<dbReference type="HAMAP" id="MF_00163">
    <property type="entry name" value="Pep_deformylase"/>
    <property type="match status" value="1"/>
</dbReference>
<dbReference type="InterPro" id="IPR023635">
    <property type="entry name" value="Peptide_deformylase"/>
</dbReference>
<dbReference type="InterPro" id="IPR036821">
    <property type="entry name" value="Peptide_deformylase_sf"/>
</dbReference>
<dbReference type="NCBIfam" id="TIGR00079">
    <property type="entry name" value="pept_deformyl"/>
    <property type="match status" value="1"/>
</dbReference>
<dbReference type="NCBIfam" id="NF001159">
    <property type="entry name" value="PRK00150.1-3"/>
    <property type="match status" value="1"/>
</dbReference>
<dbReference type="PANTHER" id="PTHR10458">
    <property type="entry name" value="PEPTIDE DEFORMYLASE"/>
    <property type="match status" value="1"/>
</dbReference>
<dbReference type="PANTHER" id="PTHR10458:SF22">
    <property type="entry name" value="PEPTIDE DEFORMYLASE"/>
    <property type="match status" value="1"/>
</dbReference>
<dbReference type="Pfam" id="PF01327">
    <property type="entry name" value="Pep_deformylase"/>
    <property type="match status" value="1"/>
</dbReference>
<dbReference type="PIRSF" id="PIRSF004749">
    <property type="entry name" value="Pep_def"/>
    <property type="match status" value="1"/>
</dbReference>
<dbReference type="PRINTS" id="PR01576">
    <property type="entry name" value="PDEFORMYLASE"/>
</dbReference>
<dbReference type="SUPFAM" id="SSF56420">
    <property type="entry name" value="Peptide deformylase"/>
    <property type="match status" value="1"/>
</dbReference>
<reference key="1">
    <citation type="submission" date="2007-05" db="EMBL/GenBank/DDBJ databases">
        <title>Complete sequence of Thermotoga petrophila RKU-1.</title>
        <authorList>
            <consortium name="US DOE Joint Genome Institute"/>
            <person name="Copeland A."/>
            <person name="Lucas S."/>
            <person name="Lapidus A."/>
            <person name="Barry K."/>
            <person name="Glavina del Rio T."/>
            <person name="Dalin E."/>
            <person name="Tice H."/>
            <person name="Pitluck S."/>
            <person name="Sims D."/>
            <person name="Brettin T."/>
            <person name="Bruce D."/>
            <person name="Detter J.C."/>
            <person name="Han C."/>
            <person name="Tapia R."/>
            <person name="Schmutz J."/>
            <person name="Larimer F."/>
            <person name="Land M."/>
            <person name="Hauser L."/>
            <person name="Kyrpides N."/>
            <person name="Mikhailova N."/>
            <person name="Nelson K."/>
            <person name="Gogarten J.P."/>
            <person name="Noll K."/>
            <person name="Richardson P."/>
        </authorList>
    </citation>
    <scope>NUCLEOTIDE SEQUENCE [LARGE SCALE GENOMIC DNA]</scope>
    <source>
        <strain>ATCC BAA-488 / DSM 13995 / JCM 10881 / RKU-1</strain>
    </source>
</reference>
<protein>
    <recommendedName>
        <fullName evidence="1">Peptide deformylase</fullName>
        <shortName evidence="1">PDF</shortName>
        <ecNumber evidence="1">3.5.1.88</ecNumber>
    </recommendedName>
    <alternativeName>
        <fullName evidence="1">Polypeptide deformylase</fullName>
    </alternativeName>
</protein>
<keyword id="KW-0378">Hydrolase</keyword>
<keyword id="KW-0408">Iron</keyword>
<keyword id="KW-0479">Metal-binding</keyword>
<keyword id="KW-0648">Protein biosynthesis</keyword>
<proteinExistence type="inferred from homology"/>